<evidence type="ECO:0000255" key="1">
    <source>
        <dbReference type="HAMAP-Rule" id="MF_00236"/>
    </source>
</evidence>
<evidence type="ECO:0000256" key="2">
    <source>
        <dbReference type="SAM" id="MobiDB-lite"/>
    </source>
</evidence>
<protein>
    <recommendedName>
        <fullName evidence="1">Sec-independent protein translocase protein TatA</fullName>
    </recommendedName>
</protein>
<feature type="chain" id="PRO_1000044361" description="Sec-independent protein translocase protein TatA">
    <location>
        <begin position="1"/>
        <end position="76"/>
    </location>
</feature>
<feature type="transmembrane region" description="Helical" evidence="1">
    <location>
        <begin position="1"/>
        <end position="21"/>
    </location>
</feature>
<feature type="region of interest" description="Disordered" evidence="2">
    <location>
        <begin position="40"/>
        <end position="76"/>
    </location>
</feature>
<feature type="compositionally biased region" description="Basic and acidic residues" evidence="2">
    <location>
        <begin position="64"/>
        <end position="76"/>
    </location>
</feature>
<organism>
    <name type="scientific">Burkholderia orbicola (strain AU 1054)</name>
    <dbReference type="NCBI Taxonomy" id="331271"/>
    <lineage>
        <taxon>Bacteria</taxon>
        <taxon>Pseudomonadati</taxon>
        <taxon>Pseudomonadota</taxon>
        <taxon>Betaproteobacteria</taxon>
        <taxon>Burkholderiales</taxon>
        <taxon>Burkholderiaceae</taxon>
        <taxon>Burkholderia</taxon>
        <taxon>Burkholderia cepacia complex</taxon>
        <taxon>Burkholderia orbicola</taxon>
    </lineage>
</organism>
<comment type="function">
    <text evidence="1">Part of the twin-arginine translocation (Tat) system that transports large folded proteins containing a characteristic twin-arginine motif in their signal peptide across membranes. TatA could form the protein-conducting channel of the Tat system.</text>
</comment>
<comment type="subunit">
    <text evidence="1">The Tat system comprises two distinct complexes: a TatABC complex, containing multiple copies of TatA, TatB and TatC subunits, and a separate TatA complex, containing only TatA subunits. Substrates initially bind to the TatABC complex, which probably triggers association of the separate TatA complex to form the active translocon.</text>
</comment>
<comment type="subcellular location">
    <subcellularLocation>
        <location evidence="1">Cell inner membrane</location>
        <topology evidence="1">Single-pass membrane protein</topology>
    </subcellularLocation>
</comment>
<comment type="similarity">
    <text evidence="1">Belongs to the TatA/E family.</text>
</comment>
<accession>Q1BS36</accession>
<name>TATA_BURO1</name>
<sequence>MGGLSIWHWLIVLLIVALVFGTKKLRNIGNDLGSAVKGFKDGMKEGETPADAQQLPRSGAVDVNAKETTRSDSNKA</sequence>
<dbReference type="EMBL" id="CP000378">
    <property type="protein sequence ID" value="ABF77569.1"/>
    <property type="molecule type" value="Genomic_DNA"/>
</dbReference>
<dbReference type="SMR" id="Q1BS36"/>
<dbReference type="HOGENOM" id="CLU_086034_5_3_4"/>
<dbReference type="GO" id="GO:0033281">
    <property type="term" value="C:TAT protein transport complex"/>
    <property type="evidence" value="ECO:0007669"/>
    <property type="project" value="UniProtKB-UniRule"/>
</dbReference>
<dbReference type="GO" id="GO:0008320">
    <property type="term" value="F:protein transmembrane transporter activity"/>
    <property type="evidence" value="ECO:0007669"/>
    <property type="project" value="UniProtKB-UniRule"/>
</dbReference>
<dbReference type="GO" id="GO:0043953">
    <property type="term" value="P:protein transport by the Tat complex"/>
    <property type="evidence" value="ECO:0007669"/>
    <property type="project" value="UniProtKB-UniRule"/>
</dbReference>
<dbReference type="Gene3D" id="1.20.5.3310">
    <property type="match status" value="1"/>
</dbReference>
<dbReference type="HAMAP" id="MF_00236">
    <property type="entry name" value="TatA_E"/>
    <property type="match status" value="1"/>
</dbReference>
<dbReference type="InterPro" id="IPR003369">
    <property type="entry name" value="TatA/B/E"/>
</dbReference>
<dbReference type="InterPro" id="IPR006312">
    <property type="entry name" value="TatA/E"/>
</dbReference>
<dbReference type="NCBIfam" id="NF002813">
    <property type="entry name" value="PRK02958.1"/>
    <property type="match status" value="1"/>
</dbReference>
<dbReference type="NCBIfam" id="TIGR01411">
    <property type="entry name" value="tatAE"/>
    <property type="match status" value="1"/>
</dbReference>
<dbReference type="PANTHER" id="PTHR42982">
    <property type="entry name" value="SEC-INDEPENDENT PROTEIN TRANSLOCASE PROTEIN TATA"/>
    <property type="match status" value="1"/>
</dbReference>
<dbReference type="PANTHER" id="PTHR42982:SF1">
    <property type="entry name" value="SEC-INDEPENDENT PROTEIN TRANSLOCASE PROTEIN TATA"/>
    <property type="match status" value="1"/>
</dbReference>
<dbReference type="Pfam" id="PF02416">
    <property type="entry name" value="TatA_B_E"/>
    <property type="match status" value="1"/>
</dbReference>
<keyword id="KW-0997">Cell inner membrane</keyword>
<keyword id="KW-1003">Cell membrane</keyword>
<keyword id="KW-0472">Membrane</keyword>
<keyword id="KW-0653">Protein transport</keyword>
<keyword id="KW-0811">Translocation</keyword>
<keyword id="KW-0812">Transmembrane</keyword>
<keyword id="KW-1133">Transmembrane helix</keyword>
<keyword id="KW-0813">Transport</keyword>
<proteinExistence type="inferred from homology"/>
<gene>
    <name evidence="1" type="primary">tatA</name>
    <name type="ordered locus">Bcen_2671</name>
</gene>
<reference key="1">
    <citation type="submission" date="2006-05" db="EMBL/GenBank/DDBJ databases">
        <title>Complete sequence of chromosome 1 of Burkholderia cenocepacia AU 1054.</title>
        <authorList>
            <consortium name="US DOE Joint Genome Institute"/>
            <person name="Copeland A."/>
            <person name="Lucas S."/>
            <person name="Lapidus A."/>
            <person name="Barry K."/>
            <person name="Detter J.C."/>
            <person name="Glavina del Rio T."/>
            <person name="Hammon N."/>
            <person name="Israni S."/>
            <person name="Dalin E."/>
            <person name="Tice H."/>
            <person name="Pitluck S."/>
            <person name="Chain P."/>
            <person name="Malfatti S."/>
            <person name="Shin M."/>
            <person name="Vergez L."/>
            <person name="Schmutz J."/>
            <person name="Larimer F."/>
            <person name="Land M."/>
            <person name="Hauser L."/>
            <person name="Kyrpides N."/>
            <person name="Lykidis A."/>
            <person name="LiPuma J.J."/>
            <person name="Konstantinidis K."/>
            <person name="Tiedje J.M."/>
            <person name="Richardson P."/>
        </authorList>
    </citation>
    <scope>NUCLEOTIDE SEQUENCE [LARGE SCALE GENOMIC DNA]</scope>
    <source>
        <strain>AU 1054</strain>
    </source>
</reference>